<comment type="function">
    <text evidence="2">Involved in the regulation of genetic competence development (PubMed:16816200). Inhibits the activity of ComA, a transcriptional factor that regulates the development of genetic competence (PubMed:16816200). Likely affects the activity of additional regulators, in particular Spo0A (PubMed:16816200).</text>
</comment>
<comment type="activity regulation">
    <text evidence="4">Inhibited by PhrK, which prevents RapK-ComA interaction.</text>
</comment>
<comment type="subcellular location">
    <subcellularLocation>
        <location evidence="3">Cytoplasm</location>
    </subcellularLocation>
</comment>
<comment type="disruption phenotype">
    <text evidence="2">Deletion of the gene has no detectable effect on expression of the srfA operon.</text>
</comment>
<comment type="similarity">
    <text evidence="3">Belongs to the Rap family.</text>
</comment>
<evidence type="ECO:0000255" key="1"/>
<evidence type="ECO:0000269" key="2">
    <source>
    </source>
</evidence>
<evidence type="ECO:0000305" key="3"/>
<evidence type="ECO:0000305" key="4">
    <source>
    </source>
</evidence>
<name>RAPK_BACSU</name>
<proteinExistence type="inferred from homology"/>
<feature type="chain" id="PRO_0000106445" description="Regulatory protein RapK">
    <location>
        <begin position="1"/>
        <end position="371"/>
    </location>
</feature>
<feature type="repeat" description="TPR 1" evidence="1">
    <location>
        <begin position="7"/>
        <end position="42"/>
    </location>
</feature>
<feature type="repeat" description="TPR 2" evidence="1">
    <location>
        <begin position="93"/>
        <end position="130"/>
    </location>
</feature>
<feature type="repeat" description="TPR 3" evidence="1">
    <location>
        <begin position="175"/>
        <end position="208"/>
    </location>
</feature>
<feature type="repeat" description="TPR 4" evidence="1">
    <location>
        <begin position="215"/>
        <end position="248"/>
    </location>
</feature>
<feature type="repeat" description="TPR 5" evidence="3">
    <location>
        <begin position="254"/>
        <end position="290"/>
    </location>
</feature>
<feature type="repeat" description="TPR 6" evidence="1">
    <location>
        <begin position="331"/>
        <end position="364"/>
    </location>
</feature>
<keyword id="KW-0178">Competence</keyword>
<keyword id="KW-0963">Cytoplasm</keyword>
<keyword id="KW-1185">Reference proteome</keyword>
<keyword id="KW-0677">Repeat</keyword>
<keyword id="KW-0802">TPR repeat</keyword>
<reference key="1">
    <citation type="submission" date="1997-11" db="EMBL/GenBank/DDBJ databases">
        <title>Sequence analysis of the Bacillus subtilis chromosome region between the terC and odhAB loci cloned in a yeast artificial chromosome.</title>
        <authorList>
            <person name="Lapidus A."/>
            <person name="Galleron N."/>
            <person name="Sorokin A."/>
            <person name="Ehrlich S.D."/>
        </authorList>
    </citation>
    <scope>NUCLEOTIDE SEQUENCE [GENOMIC DNA]</scope>
</reference>
<reference key="2">
    <citation type="journal article" date="1997" name="Nature">
        <title>The complete genome sequence of the Gram-positive bacterium Bacillus subtilis.</title>
        <authorList>
            <person name="Kunst F."/>
            <person name="Ogasawara N."/>
            <person name="Moszer I."/>
            <person name="Albertini A.M."/>
            <person name="Alloni G."/>
            <person name="Azevedo V."/>
            <person name="Bertero M.G."/>
            <person name="Bessieres P."/>
            <person name="Bolotin A."/>
            <person name="Borchert S."/>
            <person name="Borriss R."/>
            <person name="Boursier L."/>
            <person name="Brans A."/>
            <person name="Braun M."/>
            <person name="Brignell S.C."/>
            <person name="Bron S."/>
            <person name="Brouillet S."/>
            <person name="Bruschi C.V."/>
            <person name="Caldwell B."/>
            <person name="Capuano V."/>
            <person name="Carter N.M."/>
            <person name="Choi S.-K."/>
            <person name="Codani J.-J."/>
            <person name="Connerton I.F."/>
            <person name="Cummings N.J."/>
            <person name="Daniel R.A."/>
            <person name="Denizot F."/>
            <person name="Devine K.M."/>
            <person name="Duesterhoeft A."/>
            <person name="Ehrlich S.D."/>
            <person name="Emmerson P.T."/>
            <person name="Entian K.-D."/>
            <person name="Errington J."/>
            <person name="Fabret C."/>
            <person name="Ferrari E."/>
            <person name="Foulger D."/>
            <person name="Fritz C."/>
            <person name="Fujita M."/>
            <person name="Fujita Y."/>
            <person name="Fuma S."/>
            <person name="Galizzi A."/>
            <person name="Galleron N."/>
            <person name="Ghim S.-Y."/>
            <person name="Glaser P."/>
            <person name="Goffeau A."/>
            <person name="Golightly E.J."/>
            <person name="Grandi G."/>
            <person name="Guiseppi G."/>
            <person name="Guy B.J."/>
            <person name="Haga K."/>
            <person name="Haiech J."/>
            <person name="Harwood C.R."/>
            <person name="Henaut A."/>
            <person name="Hilbert H."/>
            <person name="Holsappel S."/>
            <person name="Hosono S."/>
            <person name="Hullo M.-F."/>
            <person name="Itaya M."/>
            <person name="Jones L.-M."/>
            <person name="Joris B."/>
            <person name="Karamata D."/>
            <person name="Kasahara Y."/>
            <person name="Klaerr-Blanchard M."/>
            <person name="Klein C."/>
            <person name="Kobayashi Y."/>
            <person name="Koetter P."/>
            <person name="Koningstein G."/>
            <person name="Krogh S."/>
            <person name="Kumano M."/>
            <person name="Kurita K."/>
            <person name="Lapidus A."/>
            <person name="Lardinois S."/>
            <person name="Lauber J."/>
            <person name="Lazarevic V."/>
            <person name="Lee S.-M."/>
            <person name="Levine A."/>
            <person name="Liu H."/>
            <person name="Masuda S."/>
            <person name="Mauel C."/>
            <person name="Medigue C."/>
            <person name="Medina N."/>
            <person name="Mellado R.P."/>
            <person name="Mizuno M."/>
            <person name="Moestl D."/>
            <person name="Nakai S."/>
            <person name="Noback M."/>
            <person name="Noone D."/>
            <person name="O'Reilly M."/>
            <person name="Ogawa K."/>
            <person name="Ogiwara A."/>
            <person name="Oudega B."/>
            <person name="Park S.-H."/>
            <person name="Parro V."/>
            <person name="Pohl T.M."/>
            <person name="Portetelle D."/>
            <person name="Porwollik S."/>
            <person name="Prescott A.M."/>
            <person name="Presecan E."/>
            <person name="Pujic P."/>
            <person name="Purnelle B."/>
            <person name="Rapoport G."/>
            <person name="Rey M."/>
            <person name="Reynolds S."/>
            <person name="Rieger M."/>
            <person name="Rivolta C."/>
            <person name="Rocha E."/>
            <person name="Roche B."/>
            <person name="Rose M."/>
            <person name="Sadaie Y."/>
            <person name="Sato T."/>
            <person name="Scanlan E."/>
            <person name="Schleich S."/>
            <person name="Schroeter R."/>
            <person name="Scoffone F."/>
            <person name="Sekiguchi J."/>
            <person name="Sekowska A."/>
            <person name="Seror S.J."/>
            <person name="Serror P."/>
            <person name="Shin B.-S."/>
            <person name="Soldo B."/>
            <person name="Sorokin A."/>
            <person name="Tacconi E."/>
            <person name="Takagi T."/>
            <person name="Takahashi H."/>
            <person name="Takemaru K."/>
            <person name="Takeuchi M."/>
            <person name="Tamakoshi A."/>
            <person name="Tanaka T."/>
            <person name="Terpstra P."/>
            <person name="Tognoni A."/>
            <person name="Tosato V."/>
            <person name="Uchiyama S."/>
            <person name="Vandenbol M."/>
            <person name="Vannier F."/>
            <person name="Vassarotti A."/>
            <person name="Viari A."/>
            <person name="Wambutt R."/>
            <person name="Wedler E."/>
            <person name="Wedler H."/>
            <person name="Weitzenegger T."/>
            <person name="Winters P."/>
            <person name="Wipat A."/>
            <person name="Yamamoto H."/>
            <person name="Yamane K."/>
            <person name="Yasumoto K."/>
            <person name="Yata K."/>
            <person name="Yoshida K."/>
            <person name="Yoshikawa H.-F."/>
            <person name="Zumstein E."/>
            <person name="Yoshikawa H."/>
            <person name="Danchin A."/>
        </authorList>
    </citation>
    <scope>NUCLEOTIDE SEQUENCE [LARGE SCALE GENOMIC DNA]</scope>
    <source>
        <strain>168</strain>
    </source>
</reference>
<reference key="3">
    <citation type="journal article" date="2006" name="J. Bacteriol.">
        <title>Modulation of the ComA-dependent quorum response in Bacillus subtilis by multiple Rap proteins and Phr peptides.</title>
        <authorList>
            <person name="Auchtung J.M."/>
            <person name="Lee C.A."/>
            <person name="Grossman A.D."/>
        </authorList>
    </citation>
    <scope>FUNCTION</scope>
    <scope>ACTIVITY REGULATION</scope>
    <scope>DISRUPTION PHENOTYPE</scope>
    <source>
        <strain>168 / JH642</strain>
    </source>
</reference>
<dbReference type="EMBL" id="AF027868">
    <property type="protein sequence ID" value="AAB84429.1"/>
    <property type="molecule type" value="Genomic_DNA"/>
</dbReference>
<dbReference type="EMBL" id="AL009126">
    <property type="protein sequence ID" value="CAB13783.1"/>
    <property type="molecule type" value="Genomic_DNA"/>
</dbReference>
<dbReference type="PIR" id="F69689">
    <property type="entry name" value="F69689"/>
</dbReference>
<dbReference type="RefSeq" id="NP_389772.1">
    <property type="nucleotide sequence ID" value="NC_000964.3"/>
</dbReference>
<dbReference type="RefSeq" id="WP_003231340.1">
    <property type="nucleotide sequence ID" value="NZ_OZ025638.1"/>
</dbReference>
<dbReference type="SMR" id="O34930"/>
<dbReference type="FunCoup" id="O34930">
    <property type="interactions" value="78"/>
</dbReference>
<dbReference type="STRING" id="224308.BSU18910"/>
<dbReference type="PaxDb" id="224308-BSU18910"/>
<dbReference type="DNASU" id="939604"/>
<dbReference type="EnsemblBacteria" id="CAB13783">
    <property type="protein sequence ID" value="CAB13783"/>
    <property type="gene ID" value="BSU_18910"/>
</dbReference>
<dbReference type="GeneID" id="939604"/>
<dbReference type="KEGG" id="bsu:BSU18910"/>
<dbReference type="PATRIC" id="fig|224308.179.peg.2068"/>
<dbReference type="eggNOG" id="COG0457">
    <property type="taxonomic scope" value="Bacteria"/>
</dbReference>
<dbReference type="InParanoid" id="O34930"/>
<dbReference type="OrthoDB" id="2957368at2"/>
<dbReference type="PhylomeDB" id="O34930"/>
<dbReference type="BioCyc" id="BSUB:BSU18910-MONOMER"/>
<dbReference type="Proteomes" id="UP000001570">
    <property type="component" value="Chromosome"/>
</dbReference>
<dbReference type="GO" id="GO:0005737">
    <property type="term" value="C:cytoplasm"/>
    <property type="evidence" value="ECO:0007669"/>
    <property type="project" value="UniProtKB-SubCell"/>
</dbReference>
<dbReference type="GO" id="GO:0030420">
    <property type="term" value="P:establishment of competence for transformation"/>
    <property type="evidence" value="ECO:0007669"/>
    <property type="project" value="UniProtKB-KW"/>
</dbReference>
<dbReference type="Gene3D" id="1.25.40.10">
    <property type="entry name" value="Tetratricopeptide repeat domain"/>
    <property type="match status" value="2"/>
</dbReference>
<dbReference type="InterPro" id="IPR011990">
    <property type="entry name" value="TPR-like_helical_dom_sf"/>
</dbReference>
<dbReference type="Pfam" id="PF18801">
    <property type="entry name" value="RapH_N"/>
    <property type="match status" value="1"/>
</dbReference>
<dbReference type="Pfam" id="PF13424">
    <property type="entry name" value="TPR_12"/>
    <property type="match status" value="1"/>
</dbReference>
<dbReference type="SUPFAM" id="SSF48452">
    <property type="entry name" value="TPR-like"/>
    <property type="match status" value="1"/>
</dbReference>
<protein>
    <recommendedName>
        <fullName evidence="3">Regulatory protein RapK</fullName>
    </recommendedName>
</protein>
<gene>
    <name type="primary">rapK</name>
    <name type="synonym">yobG</name>
    <name type="ordered locus">BSU18910</name>
</gene>
<accession>O34930</accession>
<sequence length="371" mass="43844">MSKIASEVVATTLNDWYIAIKKQKVDESIKYYSEIKKLFDEMEEDQEVLAYYSLLEERHKMLLHSSRGEPLQKHTYFTEDNQNFITKTNDKLEYNFYLFEAMYEAYNKNYDRAINLYGLAEKKLAEIPDEIEAAEFYSKVSYLYTLVKQSIVAQHYIKNAISIYKRHPDYKCKLATSTMIAAANYADMKRFEEAEQYYLEAIDIAKETKDEFLKAQLFHNLSIVYSDWNKPDKCIESLEKAIGNESWLHSIYYINSLFMMIKELFKIDEKMKAINFYNKAQERLILMENKVYEAKISILYNLYCGELKNNFNNCISNIEFLKQQNELESVDELSYIAAKRFESIGAFEEATSFFNAKIWAEQKMNQVEGIL</sequence>
<organism>
    <name type="scientific">Bacillus subtilis (strain 168)</name>
    <dbReference type="NCBI Taxonomy" id="224308"/>
    <lineage>
        <taxon>Bacteria</taxon>
        <taxon>Bacillati</taxon>
        <taxon>Bacillota</taxon>
        <taxon>Bacilli</taxon>
        <taxon>Bacillales</taxon>
        <taxon>Bacillaceae</taxon>
        <taxon>Bacillus</taxon>
    </lineage>
</organism>